<reference key="1">
    <citation type="submission" date="2004-09" db="EMBL/GenBank/DDBJ databases">
        <authorList>
            <consortium name="NIH - Xenopus Gene Collection (XGC) project"/>
        </authorList>
    </citation>
    <scope>NUCLEOTIDE SEQUENCE [LARGE SCALE MRNA]</scope>
    <source>
        <tissue>Testis</tissue>
    </source>
</reference>
<name>DNAL1_XENLA</name>
<organism>
    <name type="scientific">Xenopus laevis</name>
    <name type="common">African clawed frog</name>
    <dbReference type="NCBI Taxonomy" id="8355"/>
    <lineage>
        <taxon>Eukaryota</taxon>
        <taxon>Metazoa</taxon>
        <taxon>Chordata</taxon>
        <taxon>Craniata</taxon>
        <taxon>Vertebrata</taxon>
        <taxon>Euteleostomi</taxon>
        <taxon>Amphibia</taxon>
        <taxon>Batrachia</taxon>
        <taxon>Anura</taxon>
        <taxon>Pipoidea</taxon>
        <taxon>Pipidae</taxon>
        <taxon>Xenopodinae</taxon>
        <taxon>Xenopus</taxon>
        <taxon>Xenopus</taxon>
    </lineage>
</organism>
<gene>
    <name type="primary">dnal1</name>
</gene>
<protein>
    <recommendedName>
        <fullName>Dynein axonemal light chain 1</fullName>
    </recommendedName>
</protein>
<dbReference type="EMBL" id="BC082218">
    <property type="protein sequence ID" value="AAH82218.1"/>
    <property type="molecule type" value="mRNA"/>
</dbReference>
<dbReference type="RefSeq" id="NP_001087953.1">
    <property type="nucleotide sequence ID" value="NM_001094484.1"/>
</dbReference>
<dbReference type="SMR" id="Q641R9"/>
<dbReference type="DNASU" id="494635"/>
<dbReference type="GeneID" id="494635"/>
<dbReference type="KEGG" id="xla:494635"/>
<dbReference type="AGR" id="Xenbase:XB-GENE-983797"/>
<dbReference type="CTD" id="494635"/>
<dbReference type="Xenbase" id="XB-GENE-983797">
    <property type="gene designation" value="dnal1.L"/>
</dbReference>
<dbReference type="OMA" id="NCERISM"/>
<dbReference type="OrthoDB" id="266138at2759"/>
<dbReference type="Proteomes" id="UP000186698">
    <property type="component" value="Chromosome 8L"/>
</dbReference>
<dbReference type="Bgee" id="494635">
    <property type="expression patterns" value="Expressed in camera-type eye and 15 other cell types or tissues"/>
</dbReference>
<dbReference type="GO" id="GO:0042995">
    <property type="term" value="C:cell projection"/>
    <property type="evidence" value="ECO:0007669"/>
    <property type="project" value="UniProtKB-KW"/>
</dbReference>
<dbReference type="GO" id="GO:0005737">
    <property type="term" value="C:cytoplasm"/>
    <property type="evidence" value="ECO:0000318"/>
    <property type="project" value="GO_Central"/>
</dbReference>
<dbReference type="GO" id="GO:0030286">
    <property type="term" value="C:dynein complex"/>
    <property type="evidence" value="ECO:0007669"/>
    <property type="project" value="UniProtKB-KW"/>
</dbReference>
<dbReference type="GO" id="GO:0005874">
    <property type="term" value="C:microtubule"/>
    <property type="evidence" value="ECO:0007669"/>
    <property type="project" value="UniProtKB-KW"/>
</dbReference>
<dbReference type="GO" id="GO:0043014">
    <property type="term" value="F:alpha-tubulin binding"/>
    <property type="evidence" value="ECO:0000318"/>
    <property type="project" value="GO_Central"/>
</dbReference>
<dbReference type="GO" id="GO:0045504">
    <property type="term" value="F:dynein heavy chain binding"/>
    <property type="evidence" value="ECO:0000318"/>
    <property type="project" value="GO_Central"/>
</dbReference>
<dbReference type="GO" id="GO:0036158">
    <property type="term" value="P:outer dynein arm assembly"/>
    <property type="evidence" value="ECO:0000318"/>
    <property type="project" value="GO_Central"/>
</dbReference>
<dbReference type="FunFam" id="3.80.10.10:FF:000049">
    <property type="entry name" value="Dynein light chain 1"/>
    <property type="match status" value="1"/>
</dbReference>
<dbReference type="Gene3D" id="3.80.10.10">
    <property type="entry name" value="Ribonuclease Inhibitor"/>
    <property type="match status" value="1"/>
</dbReference>
<dbReference type="InterPro" id="IPR001611">
    <property type="entry name" value="Leu-rich_rpt"/>
</dbReference>
<dbReference type="InterPro" id="IPR025875">
    <property type="entry name" value="Leu-rich_rpt_4"/>
</dbReference>
<dbReference type="InterPro" id="IPR032675">
    <property type="entry name" value="LRR_dom_sf"/>
</dbReference>
<dbReference type="PANTHER" id="PTHR15454:SF73">
    <property type="entry name" value="DYNEIN AXONEMAL LIGHT CHAIN 1"/>
    <property type="match status" value="1"/>
</dbReference>
<dbReference type="PANTHER" id="PTHR15454">
    <property type="entry name" value="NISCHARIN RELATED"/>
    <property type="match status" value="1"/>
</dbReference>
<dbReference type="Pfam" id="PF12799">
    <property type="entry name" value="LRR_4"/>
    <property type="match status" value="1"/>
</dbReference>
<dbReference type="SMART" id="SM00365">
    <property type="entry name" value="LRR_SD22"/>
    <property type="match status" value="4"/>
</dbReference>
<dbReference type="SUPFAM" id="SSF52058">
    <property type="entry name" value="L domain-like"/>
    <property type="match status" value="1"/>
</dbReference>
<dbReference type="PROSITE" id="PS51450">
    <property type="entry name" value="LRR"/>
    <property type="match status" value="4"/>
</dbReference>
<accession>Q641R9</accession>
<sequence length="192" mass="21562">MAKATTIKEALAKWEERTGQKAGEAKEVKLYAQIPPLEKMDASLSTLVNCEKLSLSTNCIEKIANLNGLKYLKILSLGRNNIKNLNGLEAVGETLEELWISYNLIEKLKGIHVMKKLKVLYMSNNLVKDWAEFSKLGELPLLGDIVFVGNPLEEKHTAEGNWMEEAVKRLPKLKKLDGNPVIKQEEEEGDES</sequence>
<feature type="chain" id="PRO_0000281133" description="Dynein axonemal light chain 1">
    <location>
        <begin position="1"/>
        <end position="192"/>
    </location>
</feature>
<feature type="repeat" description="LRR 1">
    <location>
        <begin position="49"/>
        <end position="70"/>
    </location>
</feature>
<feature type="repeat" description="LRR 2">
    <location>
        <begin position="71"/>
        <end position="92"/>
    </location>
</feature>
<feature type="repeat" description="LRR 3">
    <location>
        <begin position="94"/>
        <end position="115"/>
    </location>
</feature>
<feature type="repeat" description="LRR 4">
    <location>
        <begin position="116"/>
        <end position="137"/>
    </location>
</feature>
<feature type="domain" description="LRRCT">
    <location>
        <begin position="150"/>
        <end position="192"/>
    </location>
</feature>
<comment type="function">
    <text evidence="1 2">Part of the multisubunit axonemal ATPase complexes that generate the force for cilia motility and govern beat frequency (By similarity). Component of the outer arm dynein (ODA). May be involved in a mechanosensory feedback mechanism controlling ODA activity based on external conformational cues by tethering the outer arm dynein heavy chain (DNAH5) to the microtubule within the axoneme (By similarity).</text>
</comment>
<comment type="subunit">
    <text evidence="1">Interacts with DNAH5, a outer arm dynein heavy chain. Interacts with tubulin located within the A-tubule of the outer doublets in a ATP-independent manner.</text>
</comment>
<comment type="subcellular location">
    <subcellularLocation>
        <location evidence="1">Cytoplasm</location>
        <location evidence="1">Cytoskeleton</location>
        <location evidence="1">Cilium axoneme</location>
    </subcellularLocation>
</comment>
<comment type="miscellaneous">
    <text evidence="2">Outer (ODAs) and inner (IDAs) dynein arms contain the molecular motors that generate the force to move cilia by ATP-dependent reactions. There are two mechanosensory systems that monitor and respond to the mechanical state (curvature) of the axoneme. One system involves the central pair microtubule complex and radial spokes and the second system involves the outer dynein arms.</text>
</comment>
<comment type="similarity">
    <text evidence="3">Belongs to the dynein light chain LC1-type family.</text>
</comment>
<proteinExistence type="evidence at transcript level"/>
<keyword id="KW-0966">Cell projection</keyword>
<keyword id="KW-0963">Cytoplasm</keyword>
<keyword id="KW-0206">Cytoskeleton</keyword>
<keyword id="KW-0243">Dynein</keyword>
<keyword id="KW-0433">Leucine-rich repeat</keyword>
<keyword id="KW-0493">Microtubule</keyword>
<keyword id="KW-0505">Motor protein</keyword>
<keyword id="KW-1185">Reference proteome</keyword>
<keyword id="KW-0677">Repeat</keyword>
<evidence type="ECO:0000250" key="1">
    <source>
        <dbReference type="UniProtKB" id="Q4LDG9"/>
    </source>
</evidence>
<evidence type="ECO:0000250" key="2">
    <source>
        <dbReference type="UniProtKB" id="Q9XHH2"/>
    </source>
</evidence>
<evidence type="ECO:0000305" key="3"/>